<gene>
    <name type="ordered locus">SAUSA300_2286</name>
</gene>
<feature type="chain" id="PRO_0000282271" description="UPF0060 membrane protein SAUSA300_2286">
    <location>
        <begin position="1"/>
        <end position="108"/>
    </location>
</feature>
<feature type="transmembrane region" description="Helical" evidence="1">
    <location>
        <begin position="5"/>
        <end position="25"/>
    </location>
</feature>
<feature type="transmembrane region" description="Helical" evidence="1">
    <location>
        <begin position="31"/>
        <end position="51"/>
    </location>
</feature>
<feature type="transmembrane region" description="Helical" evidence="1">
    <location>
        <begin position="60"/>
        <end position="80"/>
    </location>
</feature>
<feature type="transmembrane region" description="Helical" evidence="1">
    <location>
        <begin position="86"/>
        <end position="106"/>
    </location>
</feature>
<evidence type="ECO:0000255" key="1">
    <source>
        <dbReference type="HAMAP-Rule" id="MF_00010"/>
    </source>
</evidence>
<dbReference type="EMBL" id="CP000255">
    <property type="protein sequence ID" value="ABD22895.1"/>
    <property type="molecule type" value="Genomic_DNA"/>
</dbReference>
<dbReference type="RefSeq" id="WP_000966695.1">
    <property type="nucleotide sequence ID" value="NZ_CP027476.1"/>
</dbReference>
<dbReference type="SMR" id="Q2FEF7"/>
<dbReference type="KEGG" id="saa:SAUSA300_2286"/>
<dbReference type="HOGENOM" id="CLU_117653_0_1_9"/>
<dbReference type="OMA" id="DLYDWIG"/>
<dbReference type="Proteomes" id="UP000001939">
    <property type="component" value="Chromosome"/>
</dbReference>
<dbReference type="GO" id="GO:0005886">
    <property type="term" value="C:plasma membrane"/>
    <property type="evidence" value="ECO:0007669"/>
    <property type="project" value="UniProtKB-SubCell"/>
</dbReference>
<dbReference type="HAMAP" id="MF_00010">
    <property type="entry name" value="UPF0060"/>
    <property type="match status" value="1"/>
</dbReference>
<dbReference type="InterPro" id="IPR003844">
    <property type="entry name" value="UPF0060"/>
</dbReference>
<dbReference type="NCBIfam" id="NF002586">
    <property type="entry name" value="PRK02237.1"/>
    <property type="match status" value="1"/>
</dbReference>
<dbReference type="PANTHER" id="PTHR36116">
    <property type="entry name" value="UPF0060 MEMBRANE PROTEIN YNFA"/>
    <property type="match status" value="1"/>
</dbReference>
<dbReference type="PANTHER" id="PTHR36116:SF1">
    <property type="entry name" value="UPF0060 MEMBRANE PROTEIN YNFA"/>
    <property type="match status" value="1"/>
</dbReference>
<dbReference type="Pfam" id="PF02694">
    <property type="entry name" value="UPF0060"/>
    <property type="match status" value="1"/>
</dbReference>
<dbReference type="SUPFAM" id="SSF103481">
    <property type="entry name" value="Multidrug resistance efflux transporter EmrE"/>
    <property type="match status" value="1"/>
</dbReference>
<sequence>MLYPIFIFILAGLCEIGGGYLIWLWLREGQSSLVGLIGGAILMLYGVIATFQSFPSFGRVYAAYGGVFIIMSLIFAMVVDKQMPDKYDVIGAIICIVGVLVMLLPSRA</sequence>
<keyword id="KW-1003">Cell membrane</keyword>
<keyword id="KW-0472">Membrane</keyword>
<keyword id="KW-0812">Transmembrane</keyword>
<keyword id="KW-1133">Transmembrane helix</keyword>
<proteinExistence type="inferred from homology"/>
<comment type="subcellular location">
    <subcellularLocation>
        <location evidence="1">Cell membrane</location>
        <topology evidence="1">Multi-pass membrane protein</topology>
    </subcellularLocation>
</comment>
<comment type="similarity">
    <text evidence="1">Belongs to the UPF0060 family.</text>
</comment>
<reference key="1">
    <citation type="journal article" date="2006" name="Lancet">
        <title>Complete genome sequence of USA300, an epidemic clone of community-acquired meticillin-resistant Staphylococcus aureus.</title>
        <authorList>
            <person name="Diep B.A."/>
            <person name="Gill S.R."/>
            <person name="Chang R.F."/>
            <person name="Phan T.H."/>
            <person name="Chen J.H."/>
            <person name="Davidson M.G."/>
            <person name="Lin F."/>
            <person name="Lin J."/>
            <person name="Carleton H.A."/>
            <person name="Mongodin E.F."/>
            <person name="Sensabaugh G.F."/>
            <person name="Perdreau-Remington F."/>
        </authorList>
    </citation>
    <scope>NUCLEOTIDE SEQUENCE [LARGE SCALE GENOMIC DNA]</scope>
    <source>
        <strain>USA300</strain>
    </source>
</reference>
<organism>
    <name type="scientific">Staphylococcus aureus (strain USA300)</name>
    <dbReference type="NCBI Taxonomy" id="367830"/>
    <lineage>
        <taxon>Bacteria</taxon>
        <taxon>Bacillati</taxon>
        <taxon>Bacillota</taxon>
        <taxon>Bacilli</taxon>
        <taxon>Bacillales</taxon>
        <taxon>Staphylococcaceae</taxon>
        <taxon>Staphylococcus</taxon>
    </lineage>
</organism>
<accession>Q2FEF7</accession>
<protein>
    <recommendedName>
        <fullName evidence="1">UPF0060 membrane protein SAUSA300_2286</fullName>
    </recommendedName>
</protein>
<name>Y2286_STAA3</name>